<proteinExistence type="inferred from homology"/>
<feature type="chain" id="PRO_1000046215" description="Large ribosomal subunit protein uL11">
    <location>
        <begin position="1"/>
        <end position="143"/>
    </location>
</feature>
<reference key="1">
    <citation type="journal article" date="2007" name="J. Bacteriol.">
        <title>Whole-genome analysis of the methyl tert-butyl ether-degrading beta-proteobacterium Methylibium petroleiphilum PM1.</title>
        <authorList>
            <person name="Kane S.R."/>
            <person name="Chakicherla A.Y."/>
            <person name="Chain P.S.G."/>
            <person name="Schmidt R."/>
            <person name="Shin M.W."/>
            <person name="Legler T.C."/>
            <person name="Scow K.M."/>
            <person name="Larimer F.W."/>
            <person name="Lucas S.M."/>
            <person name="Richardson P.M."/>
            <person name="Hristova K.R."/>
        </authorList>
    </citation>
    <scope>NUCLEOTIDE SEQUENCE [LARGE SCALE GENOMIC DNA]</scope>
    <source>
        <strain>ATCC BAA-1232 / LMG 22953 / PM1</strain>
    </source>
</reference>
<keyword id="KW-0488">Methylation</keyword>
<keyword id="KW-1185">Reference proteome</keyword>
<keyword id="KW-0687">Ribonucleoprotein</keyword>
<keyword id="KW-0689">Ribosomal protein</keyword>
<keyword id="KW-0694">RNA-binding</keyword>
<keyword id="KW-0699">rRNA-binding</keyword>
<sequence length="143" mass="15072">MAKKIVGFIKLQIPAGKANPSPPIGPALGQRGLNIMEFCKAFNAQTQSMEPGLVLPVVITAFADKSFTFVLKSPPATVLIKKAIKLDKGSSKPHTDKVGKITRAQLEEIAKTKTKDLTAADLDAAVRTIAGTARSMGVTTEGV</sequence>
<dbReference type="EMBL" id="CP000555">
    <property type="protein sequence ID" value="ABM96408.1"/>
    <property type="molecule type" value="Genomic_DNA"/>
</dbReference>
<dbReference type="RefSeq" id="WP_011831029.1">
    <property type="nucleotide sequence ID" value="NC_008825.1"/>
</dbReference>
<dbReference type="SMR" id="A2SLG9"/>
<dbReference type="STRING" id="420662.Mpe_A3455"/>
<dbReference type="KEGG" id="mpt:Mpe_A3455"/>
<dbReference type="eggNOG" id="COG0080">
    <property type="taxonomic scope" value="Bacteria"/>
</dbReference>
<dbReference type="HOGENOM" id="CLU_074237_2_0_4"/>
<dbReference type="Proteomes" id="UP000000366">
    <property type="component" value="Chromosome"/>
</dbReference>
<dbReference type="GO" id="GO:0022625">
    <property type="term" value="C:cytosolic large ribosomal subunit"/>
    <property type="evidence" value="ECO:0007669"/>
    <property type="project" value="TreeGrafter"/>
</dbReference>
<dbReference type="GO" id="GO:0070180">
    <property type="term" value="F:large ribosomal subunit rRNA binding"/>
    <property type="evidence" value="ECO:0007669"/>
    <property type="project" value="UniProtKB-UniRule"/>
</dbReference>
<dbReference type="GO" id="GO:0003735">
    <property type="term" value="F:structural constituent of ribosome"/>
    <property type="evidence" value="ECO:0007669"/>
    <property type="project" value="InterPro"/>
</dbReference>
<dbReference type="GO" id="GO:0006412">
    <property type="term" value="P:translation"/>
    <property type="evidence" value="ECO:0007669"/>
    <property type="project" value="UniProtKB-UniRule"/>
</dbReference>
<dbReference type="CDD" id="cd00349">
    <property type="entry name" value="Ribosomal_L11"/>
    <property type="match status" value="1"/>
</dbReference>
<dbReference type="FunFam" id="1.10.10.250:FF:000001">
    <property type="entry name" value="50S ribosomal protein L11"/>
    <property type="match status" value="1"/>
</dbReference>
<dbReference type="FunFam" id="3.30.1550.10:FF:000001">
    <property type="entry name" value="50S ribosomal protein L11"/>
    <property type="match status" value="1"/>
</dbReference>
<dbReference type="Gene3D" id="1.10.10.250">
    <property type="entry name" value="Ribosomal protein L11, C-terminal domain"/>
    <property type="match status" value="1"/>
</dbReference>
<dbReference type="Gene3D" id="3.30.1550.10">
    <property type="entry name" value="Ribosomal protein L11/L12, N-terminal domain"/>
    <property type="match status" value="1"/>
</dbReference>
<dbReference type="HAMAP" id="MF_00736">
    <property type="entry name" value="Ribosomal_uL11"/>
    <property type="match status" value="1"/>
</dbReference>
<dbReference type="InterPro" id="IPR000911">
    <property type="entry name" value="Ribosomal_uL11"/>
</dbReference>
<dbReference type="InterPro" id="IPR006519">
    <property type="entry name" value="Ribosomal_uL11_bac-typ"/>
</dbReference>
<dbReference type="InterPro" id="IPR020783">
    <property type="entry name" value="Ribosomal_uL11_C"/>
</dbReference>
<dbReference type="InterPro" id="IPR036769">
    <property type="entry name" value="Ribosomal_uL11_C_sf"/>
</dbReference>
<dbReference type="InterPro" id="IPR020784">
    <property type="entry name" value="Ribosomal_uL11_N"/>
</dbReference>
<dbReference type="InterPro" id="IPR036796">
    <property type="entry name" value="Ribosomal_uL11_N_sf"/>
</dbReference>
<dbReference type="NCBIfam" id="TIGR01632">
    <property type="entry name" value="L11_bact"/>
    <property type="match status" value="1"/>
</dbReference>
<dbReference type="PANTHER" id="PTHR11661">
    <property type="entry name" value="60S RIBOSOMAL PROTEIN L12"/>
    <property type="match status" value="1"/>
</dbReference>
<dbReference type="PANTHER" id="PTHR11661:SF1">
    <property type="entry name" value="LARGE RIBOSOMAL SUBUNIT PROTEIN UL11M"/>
    <property type="match status" value="1"/>
</dbReference>
<dbReference type="Pfam" id="PF00298">
    <property type="entry name" value="Ribosomal_L11"/>
    <property type="match status" value="1"/>
</dbReference>
<dbReference type="Pfam" id="PF03946">
    <property type="entry name" value="Ribosomal_L11_N"/>
    <property type="match status" value="1"/>
</dbReference>
<dbReference type="SMART" id="SM00649">
    <property type="entry name" value="RL11"/>
    <property type="match status" value="1"/>
</dbReference>
<dbReference type="SUPFAM" id="SSF54747">
    <property type="entry name" value="Ribosomal L11/L12e N-terminal domain"/>
    <property type="match status" value="1"/>
</dbReference>
<dbReference type="SUPFAM" id="SSF46906">
    <property type="entry name" value="Ribosomal protein L11, C-terminal domain"/>
    <property type="match status" value="1"/>
</dbReference>
<gene>
    <name evidence="1" type="primary">rplK</name>
    <name type="ordered locus">Mpe_A3455</name>
</gene>
<name>RL11_METPP</name>
<accession>A2SLG9</accession>
<protein>
    <recommendedName>
        <fullName evidence="1">Large ribosomal subunit protein uL11</fullName>
    </recommendedName>
    <alternativeName>
        <fullName evidence="2">50S ribosomal protein L11</fullName>
    </alternativeName>
</protein>
<comment type="function">
    <text evidence="1">Forms part of the ribosomal stalk which helps the ribosome interact with GTP-bound translation factors.</text>
</comment>
<comment type="subunit">
    <text evidence="1">Part of the ribosomal stalk of the 50S ribosomal subunit. Interacts with L10 and the large rRNA to form the base of the stalk. L10 forms an elongated spine to which L12 dimers bind in a sequential fashion forming a multimeric L10(L12)X complex.</text>
</comment>
<comment type="PTM">
    <text evidence="1">One or more lysine residues are methylated.</text>
</comment>
<comment type="similarity">
    <text evidence="1">Belongs to the universal ribosomal protein uL11 family.</text>
</comment>
<organism>
    <name type="scientific">Methylibium petroleiphilum (strain ATCC BAA-1232 / LMG 22953 / PM1)</name>
    <dbReference type="NCBI Taxonomy" id="420662"/>
    <lineage>
        <taxon>Bacteria</taxon>
        <taxon>Pseudomonadati</taxon>
        <taxon>Pseudomonadota</taxon>
        <taxon>Betaproteobacteria</taxon>
        <taxon>Burkholderiales</taxon>
        <taxon>Sphaerotilaceae</taxon>
        <taxon>Methylibium</taxon>
    </lineage>
</organism>
<evidence type="ECO:0000255" key="1">
    <source>
        <dbReference type="HAMAP-Rule" id="MF_00736"/>
    </source>
</evidence>
<evidence type="ECO:0000305" key="2"/>